<proteinExistence type="inferred from homology"/>
<name>CLPP2_SYNSC</name>
<gene>
    <name evidence="1" type="primary">clpP2</name>
    <name type="ordered locus">Syncc9605_1440</name>
</gene>
<sequence>MIPIVIEESGRGERAFDIYSRLLRERIIFLGEAVTSDSANRIVAQMLFLEAEDPEKDIYLYINSPGGSVYDGLGIFDTMQHIKPDVHTVCVGLAASMGAFLLCAGTKGKRSSLQHSRIMIHQPLGGAQGQASDIRIQADEILFLKERLNKELSDRTGQTLDRIQQDTDRDFFMSPTEAMNYGLIDSVIDKRPVQAVA</sequence>
<reference key="1">
    <citation type="submission" date="2005-07" db="EMBL/GenBank/DDBJ databases">
        <title>Complete sequence of Synechococcus sp. CC9605.</title>
        <authorList>
            <consortium name="US DOE Joint Genome Institute"/>
            <person name="Copeland A."/>
            <person name="Lucas S."/>
            <person name="Lapidus A."/>
            <person name="Barry K."/>
            <person name="Detter J.C."/>
            <person name="Glavina T."/>
            <person name="Hammon N."/>
            <person name="Israni S."/>
            <person name="Pitluck S."/>
            <person name="Schmutz J."/>
            <person name="Martinez M."/>
            <person name="Larimer F."/>
            <person name="Land M."/>
            <person name="Kyrpides N."/>
            <person name="Ivanova N."/>
            <person name="Richardson P."/>
        </authorList>
    </citation>
    <scope>NUCLEOTIDE SEQUENCE [LARGE SCALE GENOMIC DNA]</scope>
    <source>
        <strain>CC9605</strain>
    </source>
</reference>
<keyword id="KW-0963">Cytoplasm</keyword>
<keyword id="KW-0378">Hydrolase</keyword>
<keyword id="KW-0645">Protease</keyword>
<keyword id="KW-0720">Serine protease</keyword>
<comment type="function">
    <text evidence="1">Cleaves peptides in various proteins in a process that requires ATP hydrolysis. Has a chymotrypsin-like activity. Plays a major role in the degradation of misfolded proteins.</text>
</comment>
<comment type="catalytic activity">
    <reaction evidence="1">
        <text>Hydrolysis of proteins to small peptides in the presence of ATP and magnesium. alpha-casein is the usual test substrate. In the absence of ATP, only oligopeptides shorter than five residues are hydrolyzed (such as succinyl-Leu-Tyr-|-NHMec, and Leu-Tyr-Leu-|-Tyr-Trp, in which cleavage of the -Tyr-|-Leu- and -Tyr-|-Trp bonds also occurs).</text>
        <dbReference type="EC" id="3.4.21.92"/>
    </reaction>
</comment>
<comment type="subunit">
    <text evidence="1">Fourteen ClpP subunits assemble into 2 heptameric rings which stack back to back to give a disk-like structure with a central cavity, resembling the structure of eukaryotic proteasomes.</text>
</comment>
<comment type="subcellular location">
    <subcellularLocation>
        <location evidence="1">Cytoplasm</location>
    </subcellularLocation>
</comment>
<comment type="similarity">
    <text evidence="1">Belongs to the peptidase S14 family.</text>
</comment>
<comment type="sequence caution" evidence="2">
    <conflict type="erroneous initiation">
        <sequence resource="EMBL-CDS" id="ABB35194"/>
    </conflict>
</comment>
<organism>
    <name type="scientific">Synechococcus sp. (strain CC9605)</name>
    <dbReference type="NCBI Taxonomy" id="110662"/>
    <lineage>
        <taxon>Bacteria</taxon>
        <taxon>Bacillati</taxon>
        <taxon>Cyanobacteriota</taxon>
        <taxon>Cyanophyceae</taxon>
        <taxon>Synechococcales</taxon>
        <taxon>Synechococcaceae</taxon>
        <taxon>Synechococcus</taxon>
    </lineage>
</organism>
<evidence type="ECO:0000255" key="1">
    <source>
        <dbReference type="HAMAP-Rule" id="MF_00444"/>
    </source>
</evidence>
<evidence type="ECO:0000305" key="2"/>
<protein>
    <recommendedName>
        <fullName evidence="1">ATP-dependent Clp protease proteolytic subunit 2</fullName>
        <ecNumber evidence="1">3.4.21.92</ecNumber>
    </recommendedName>
    <alternativeName>
        <fullName evidence="1">Endopeptidase Clp 2</fullName>
    </alternativeName>
</protein>
<dbReference type="EC" id="3.4.21.92" evidence="1"/>
<dbReference type="EMBL" id="CP000110">
    <property type="protein sequence ID" value="ABB35194.1"/>
    <property type="status" value="ALT_INIT"/>
    <property type="molecule type" value="Genomic_DNA"/>
</dbReference>
<dbReference type="RefSeq" id="WP_041434797.1">
    <property type="nucleotide sequence ID" value="NC_007516.1"/>
</dbReference>
<dbReference type="SMR" id="Q3AJN8"/>
<dbReference type="STRING" id="110662.Syncc9605_1440"/>
<dbReference type="MEROPS" id="S14.001"/>
<dbReference type="KEGG" id="syd:Syncc9605_1440"/>
<dbReference type="eggNOG" id="COG0740">
    <property type="taxonomic scope" value="Bacteria"/>
</dbReference>
<dbReference type="HOGENOM" id="CLU_058707_3_2_3"/>
<dbReference type="OrthoDB" id="571524at2"/>
<dbReference type="GO" id="GO:0005737">
    <property type="term" value="C:cytoplasm"/>
    <property type="evidence" value="ECO:0007669"/>
    <property type="project" value="UniProtKB-SubCell"/>
</dbReference>
<dbReference type="GO" id="GO:0009368">
    <property type="term" value="C:endopeptidase Clp complex"/>
    <property type="evidence" value="ECO:0007669"/>
    <property type="project" value="TreeGrafter"/>
</dbReference>
<dbReference type="GO" id="GO:0004176">
    <property type="term" value="F:ATP-dependent peptidase activity"/>
    <property type="evidence" value="ECO:0007669"/>
    <property type="project" value="InterPro"/>
</dbReference>
<dbReference type="GO" id="GO:0051117">
    <property type="term" value="F:ATPase binding"/>
    <property type="evidence" value="ECO:0007669"/>
    <property type="project" value="TreeGrafter"/>
</dbReference>
<dbReference type="GO" id="GO:0004252">
    <property type="term" value="F:serine-type endopeptidase activity"/>
    <property type="evidence" value="ECO:0007669"/>
    <property type="project" value="UniProtKB-UniRule"/>
</dbReference>
<dbReference type="GO" id="GO:0006515">
    <property type="term" value="P:protein quality control for misfolded or incompletely synthesized proteins"/>
    <property type="evidence" value="ECO:0007669"/>
    <property type="project" value="TreeGrafter"/>
</dbReference>
<dbReference type="CDD" id="cd07017">
    <property type="entry name" value="S14_ClpP_2"/>
    <property type="match status" value="1"/>
</dbReference>
<dbReference type="FunFam" id="3.90.226.10:FF:000001">
    <property type="entry name" value="ATP-dependent Clp protease proteolytic subunit"/>
    <property type="match status" value="1"/>
</dbReference>
<dbReference type="Gene3D" id="3.90.226.10">
    <property type="entry name" value="2-enoyl-CoA Hydratase, Chain A, domain 1"/>
    <property type="match status" value="1"/>
</dbReference>
<dbReference type="HAMAP" id="MF_00444">
    <property type="entry name" value="ClpP"/>
    <property type="match status" value="1"/>
</dbReference>
<dbReference type="InterPro" id="IPR001907">
    <property type="entry name" value="ClpP"/>
</dbReference>
<dbReference type="InterPro" id="IPR029045">
    <property type="entry name" value="ClpP/crotonase-like_dom_sf"/>
</dbReference>
<dbReference type="InterPro" id="IPR023562">
    <property type="entry name" value="ClpP/TepA"/>
</dbReference>
<dbReference type="InterPro" id="IPR018215">
    <property type="entry name" value="ClpP_Ser_AS"/>
</dbReference>
<dbReference type="NCBIfam" id="TIGR00493">
    <property type="entry name" value="clpP"/>
    <property type="match status" value="1"/>
</dbReference>
<dbReference type="NCBIfam" id="NF001368">
    <property type="entry name" value="PRK00277.1"/>
    <property type="match status" value="1"/>
</dbReference>
<dbReference type="NCBIfam" id="NF009203">
    <property type="entry name" value="PRK12551.1"/>
    <property type="match status" value="1"/>
</dbReference>
<dbReference type="NCBIfam" id="NF009205">
    <property type="entry name" value="PRK12553.1"/>
    <property type="match status" value="1"/>
</dbReference>
<dbReference type="PANTHER" id="PTHR10381">
    <property type="entry name" value="ATP-DEPENDENT CLP PROTEASE PROTEOLYTIC SUBUNIT"/>
    <property type="match status" value="1"/>
</dbReference>
<dbReference type="PANTHER" id="PTHR10381:SF70">
    <property type="entry name" value="ATP-DEPENDENT CLP PROTEASE PROTEOLYTIC SUBUNIT"/>
    <property type="match status" value="1"/>
</dbReference>
<dbReference type="Pfam" id="PF00574">
    <property type="entry name" value="CLP_protease"/>
    <property type="match status" value="1"/>
</dbReference>
<dbReference type="PRINTS" id="PR00127">
    <property type="entry name" value="CLPPROTEASEP"/>
</dbReference>
<dbReference type="SUPFAM" id="SSF52096">
    <property type="entry name" value="ClpP/crotonase"/>
    <property type="match status" value="1"/>
</dbReference>
<dbReference type="PROSITE" id="PS00381">
    <property type="entry name" value="CLP_PROTEASE_SER"/>
    <property type="match status" value="1"/>
</dbReference>
<feature type="chain" id="PRO_0000236407" description="ATP-dependent Clp protease proteolytic subunit 2">
    <location>
        <begin position="1"/>
        <end position="197"/>
    </location>
</feature>
<feature type="active site" description="Nucleophile" evidence="1">
    <location>
        <position position="96"/>
    </location>
</feature>
<feature type="active site" evidence="1">
    <location>
        <position position="121"/>
    </location>
</feature>
<accession>Q3AJN8</accession>